<dbReference type="SMR" id="P85212"/>
<dbReference type="InParanoid" id="P85212"/>
<dbReference type="Proteomes" id="UP000504614">
    <property type="component" value="Unplaced"/>
</dbReference>
<dbReference type="GO" id="GO:0005615">
    <property type="term" value="C:extracellular space"/>
    <property type="evidence" value="ECO:0000314"/>
    <property type="project" value="UniProtKB"/>
</dbReference>
<dbReference type="GO" id="GO:0050830">
    <property type="term" value="P:defense response to Gram-positive bacterium"/>
    <property type="evidence" value="ECO:0000314"/>
    <property type="project" value="UniProtKB"/>
</dbReference>
<dbReference type="GO" id="GO:0045087">
    <property type="term" value="P:innate immune response"/>
    <property type="evidence" value="ECO:0000314"/>
    <property type="project" value="UniProtKB"/>
</dbReference>
<organism>
    <name type="scientific">Galleria mellonella</name>
    <name type="common">Greater wax moth</name>
    <dbReference type="NCBI Taxonomy" id="7137"/>
    <lineage>
        <taxon>Eukaryota</taxon>
        <taxon>Metazoa</taxon>
        <taxon>Ecdysozoa</taxon>
        <taxon>Arthropoda</taxon>
        <taxon>Hexapoda</taxon>
        <taxon>Insecta</taxon>
        <taxon>Pterygota</taxon>
        <taxon>Neoptera</taxon>
        <taxon>Endopterygota</taxon>
        <taxon>Lepidoptera</taxon>
        <taxon>Glossata</taxon>
        <taxon>Ditrysia</taxon>
        <taxon>Pyraloidea</taxon>
        <taxon>Pyralidae</taxon>
        <taxon>Galleriinae</taxon>
        <taxon>Galleria</taxon>
    </lineage>
</organism>
<proteinExistence type="evidence at protein level"/>
<reference evidence="2" key="1">
    <citation type="journal article" date="2007" name="Peptides">
        <title>Purification and characterization of eight peptides from Galleria mellonella immune hemolymph.</title>
        <authorList>
            <person name="Cytrynska M."/>
            <person name="Mak P."/>
            <person name="Zdybicka-Barabas A."/>
            <person name="Suder P."/>
            <person name="Jakubowicz T."/>
        </authorList>
    </citation>
    <scope>PROTEIN SEQUENCE</scope>
    <scope>FUNCTION</scope>
    <scope>SUBCELLULAR LOCATION</scope>
    <scope>TISSUE SPECIFICITY</scope>
    <scope>INDUCTION</scope>
    <scope>MASS SPECTROMETRY</scope>
    <source>
        <tissue evidence="1">Larval hemolymph</tissue>
    </source>
</reference>
<accession>P85212</accession>
<comment type="function">
    <text evidence="1">Antimicrobial protein. Has antibacterial activity against the Gram-positive bacterium M.luteus (MIC=8.6 uM). Lacks antibacterial activity against the Gram-positive bacteria B.circulans, L.monocytogenes, S.aureus, and S.lutea, and the Gram-negative bacteria E.coli D31, E.coli ATCC 25922, and S.typhimurium. Lacks antifungal activity against S.cerevisiae, P.pastoris, Z.marxianus, C.albicans, C.fructus, C.wickerhamii, A.niger, F.oxysporum, and T.harizianum.</text>
</comment>
<comment type="subcellular location">
    <subcellularLocation>
        <location evidence="1">Secreted</location>
    </subcellularLocation>
</comment>
<comment type="tissue specificity">
    <text evidence="1">Hemolymph.</text>
</comment>
<comment type="induction">
    <text evidence="1">By bacterial infection.</text>
</comment>
<comment type="mass spectrometry"/>
<protein>
    <recommendedName>
        <fullName>Proline-rich antimicrobial peptide 2</fullName>
    </recommendedName>
</protein>
<keyword id="KW-0044">Antibiotic</keyword>
<keyword id="KW-0929">Antimicrobial</keyword>
<keyword id="KW-0903">Direct protein sequencing</keyword>
<keyword id="KW-0391">Immunity</keyword>
<keyword id="KW-0399">Innate immunity</keyword>
<keyword id="KW-1185">Reference proteome</keyword>
<keyword id="KW-0964">Secreted</keyword>
<feature type="peptide" id="PRO_0000298767" description="Proline-rich antimicrobial peptide 2">
    <location>
        <begin position="1"/>
        <end position="42"/>
    </location>
</feature>
<evidence type="ECO:0000269" key="1">
    <source>
    </source>
</evidence>
<evidence type="ECO:0000305" key="2"/>
<sequence>EIRLPEPFRFPSPTVPKPIDIDPILPHPWSPRQTYPIIARRS</sequence>
<name>PROP2_GALME</name>